<comment type="function">
    <text evidence="1">Catalyzes the oxidation of 5,10-methylenetetrahydrofolate to 5,10-methenyltetrahydrofolate and then the hydrolysis of 5,10-methenyltetrahydrofolate to 10-formyltetrahydrofolate.</text>
</comment>
<comment type="catalytic activity">
    <reaction evidence="1">
        <text>(6R)-5,10-methylene-5,6,7,8-tetrahydrofolate + NADP(+) = (6R)-5,10-methenyltetrahydrofolate + NADPH</text>
        <dbReference type="Rhea" id="RHEA:22812"/>
        <dbReference type="ChEBI" id="CHEBI:15636"/>
        <dbReference type="ChEBI" id="CHEBI:57455"/>
        <dbReference type="ChEBI" id="CHEBI:57783"/>
        <dbReference type="ChEBI" id="CHEBI:58349"/>
        <dbReference type="EC" id="1.5.1.5"/>
    </reaction>
</comment>
<comment type="catalytic activity">
    <reaction evidence="1">
        <text>(6R)-5,10-methenyltetrahydrofolate + H2O = (6R)-10-formyltetrahydrofolate + H(+)</text>
        <dbReference type="Rhea" id="RHEA:23700"/>
        <dbReference type="ChEBI" id="CHEBI:15377"/>
        <dbReference type="ChEBI" id="CHEBI:15378"/>
        <dbReference type="ChEBI" id="CHEBI:57455"/>
        <dbReference type="ChEBI" id="CHEBI:195366"/>
        <dbReference type="EC" id="3.5.4.9"/>
    </reaction>
</comment>
<comment type="pathway">
    <text evidence="1">One-carbon metabolism; tetrahydrofolate interconversion.</text>
</comment>
<comment type="subunit">
    <text evidence="1">Homodimer.</text>
</comment>
<comment type="similarity">
    <text evidence="1">Belongs to the tetrahydrofolate dehydrogenase/cyclohydrolase family.</text>
</comment>
<reference key="1">
    <citation type="journal article" date="2006" name="J. Bacteriol.">
        <title>Complete genome sequence of Yersinia pestis strains Antiqua and Nepal516: evidence of gene reduction in an emerging pathogen.</title>
        <authorList>
            <person name="Chain P.S.G."/>
            <person name="Hu P."/>
            <person name="Malfatti S.A."/>
            <person name="Radnedge L."/>
            <person name="Larimer F."/>
            <person name="Vergez L.M."/>
            <person name="Worsham P."/>
            <person name="Chu M.C."/>
            <person name="Andersen G.L."/>
        </authorList>
    </citation>
    <scope>NUCLEOTIDE SEQUENCE [LARGE SCALE GENOMIC DNA]</scope>
    <source>
        <strain>Nepal516</strain>
    </source>
</reference>
<reference key="2">
    <citation type="submission" date="2009-04" db="EMBL/GenBank/DDBJ databases">
        <title>Yersinia pestis Nepal516A whole genome shotgun sequencing project.</title>
        <authorList>
            <person name="Plunkett G. III"/>
            <person name="Anderson B.D."/>
            <person name="Baumler D.J."/>
            <person name="Burland V."/>
            <person name="Cabot E.L."/>
            <person name="Glasner J.D."/>
            <person name="Mau B."/>
            <person name="Neeno-Eckwall E."/>
            <person name="Perna N.T."/>
            <person name="Munk A.C."/>
            <person name="Tapia R."/>
            <person name="Green L.D."/>
            <person name="Rogers Y.C."/>
            <person name="Detter J.C."/>
            <person name="Bruce D.C."/>
            <person name="Brettin T.S."/>
        </authorList>
    </citation>
    <scope>NUCLEOTIDE SEQUENCE [LARGE SCALE GENOMIC DNA]</scope>
    <source>
        <strain>Nepal516</strain>
    </source>
</reference>
<name>FOLD_YERPN</name>
<feature type="chain" id="PRO_0000268575" description="Bifunctional protein FolD">
    <location>
        <begin position="1"/>
        <end position="288"/>
    </location>
</feature>
<feature type="binding site" evidence="1">
    <location>
        <begin position="166"/>
        <end position="168"/>
    </location>
    <ligand>
        <name>NADP(+)</name>
        <dbReference type="ChEBI" id="CHEBI:58349"/>
    </ligand>
</feature>
<feature type="binding site" evidence="1">
    <location>
        <position position="232"/>
    </location>
    <ligand>
        <name>NADP(+)</name>
        <dbReference type="ChEBI" id="CHEBI:58349"/>
    </ligand>
</feature>
<dbReference type="EC" id="1.5.1.5" evidence="1"/>
<dbReference type="EC" id="3.5.4.9" evidence="1"/>
<dbReference type="EMBL" id="CP000305">
    <property type="protein sequence ID" value="ABG17352.1"/>
    <property type="molecule type" value="Genomic_DNA"/>
</dbReference>
<dbReference type="EMBL" id="ACNQ01000008">
    <property type="protein sequence ID" value="EEO77436.1"/>
    <property type="molecule type" value="Genomic_DNA"/>
</dbReference>
<dbReference type="RefSeq" id="WP_002209774.1">
    <property type="nucleotide sequence ID" value="NZ_ACNQ01000008.1"/>
</dbReference>
<dbReference type="SMR" id="Q1CKX8"/>
<dbReference type="GeneID" id="57975784"/>
<dbReference type="KEGG" id="ypn:YPN_1020"/>
<dbReference type="HOGENOM" id="CLU_034045_2_1_6"/>
<dbReference type="UniPathway" id="UPA00193"/>
<dbReference type="Proteomes" id="UP000008936">
    <property type="component" value="Chromosome"/>
</dbReference>
<dbReference type="GO" id="GO:0005829">
    <property type="term" value="C:cytosol"/>
    <property type="evidence" value="ECO:0007669"/>
    <property type="project" value="TreeGrafter"/>
</dbReference>
<dbReference type="GO" id="GO:0004477">
    <property type="term" value="F:methenyltetrahydrofolate cyclohydrolase activity"/>
    <property type="evidence" value="ECO:0007669"/>
    <property type="project" value="UniProtKB-UniRule"/>
</dbReference>
<dbReference type="GO" id="GO:0004488">
    <property type="term" value="F:methylenetetrahydrofolate dehydrogenase (NADP+) activity"/>
    <property type="evidence" value="ECO:0007669"/>
    <property type="project" value="UniProtKB-UniRule"/>
</dbReference>
<dbReference type="GO" id="GO:0000105">
    <property type="term" value="P:L-histidine biosynthetic process"/>
    <property type="evidence" value="ECO:0007669"/>
    <property type="project" value="UniProtKB-KW"/>
</dbReference>
<dbReference type="GO" id="GO:0009086">
    <property type="term" value="P:methionine biosynthetic process"/>
    <property type="evidence" value="ECO:0007669"/>
    <property type="project" value="UniProtKB-KW"/>
</dbReference>
<dbReference type="GO" id="GO:0006164">
    <property type="term" value="P:purine nucleotide biosynthetic process"/>
    <property type="evidence" value="ECO:0007669"/>
    <property type="project" value="UniProtKB-KW"/>
</dbReference>
<dbReference type="GO" id="GO:0035999">
    <property type="term" value="P:tetrahydrofolate interconversion"/>
    <property type="evidence" value="ECO:0007669"/>
    <property type="project" value="UniProtKB-UniRule"/>
</dbReference>
<dbReference type="CDD" id="cd01080">
    <property type="entry name" value="NAD_bind_m-THF_DH_Cyclohyd"/>
    <property type="match status" value="1"/>
</dbReference>
<dbReference type="FunFam" id="3.40.50.10860:FF:000001">
    <property type="entry name" value="Bifunctional protein FolD"/>
    <property type="match status" value="1"/>
</dbReference>
<dbReference type="FunFam" id="3.40.50.720:FF:000006">
    <property type="entry name" value="Bifunctional protein FolD"/>
    <property type="match status" value="1"/>
</dbReference>
<dbReference type="Gene3D" id="3.40.50.10860">
    <property type="entry name" value="Leucine Dehydrogenase, chain A, domain 1"/>
    <property type="match status" value="1"/>
</dbReference>
<dbReference type="Gene3D" id="3.40.50.720">
    <property type="entry name" value="NAD(P)-binding Rossmann-like Domain"/>
    <property type="match status" value="1"/>
</dbReference>
<dbReference type="HAMAP" id="MF_01576">
    <property type="entry name" value="THF_DHG_CYH"/>
    <property type="match status" value="1"/>
</dbReference>
<dbReference type="InterPro" id="IPR046346">
    <property type="entry name" value="Aminoacid_DH-like_N_sf"/>
</dbReference>
<dbReference type="InterPro" id="IPR036291">
    <property type="entry name" value="NAD(P)-bd_dom_sf"/>
</dbReference>
<dbReference type="InterPro" id="IPR000672">
    <property type="entry name" value="THF_DH/CycHdrlase"/>
</dbReference>
<dbReference type="InterPro" id="IPR020630">
    <property type="entry name" value="THF_DH/CycHdrlase_cat_dom"/>
</dbReference>
<dbReference type="InterPro" id="IPR020867">
    <property type="entry name" value="THF_DH/CycHdrlase_CS"/>
</dbReference>
<dbReference type="InterPro" id="IPR020631">
    <property type="entry name" value="THF_DH/CycHdrlase_NAD-bd_dom"/>
</dbReference>
<dbReference type="NCBIfam" id="NF008058">
    <property type="entry name" value="PRK10792.1"/>
    <property type="match status" value="1"/>
</dbReference>
<dbReference type="NCBIfam" id="NF010783">
    <property type="entry name" value="PRK14186.1"/>
    <property type="match status" value="1"/>
</dbReference>
<dbReference type="PANTHER" id="PTHR48099:SF5">
    <property type="entry name" value="C-1-TETRAHYDROFOLATE SYNTHASE, CYTOPLASMIC"/>
    <property type="match status" value="1"/>
</dbReference>
<dbReference type="PANTHER" id="PTHR48099">
    <property type="entry name" value="C-1-TETRAHYDROFOLATE SYNTHASE, CYTOPLASMIC-RELATED"/>
    <property type="match status" value="1"/>
</dbReference>
<dbReference type="Pfam" id="PF00763">
    <property type="entry name" value="THF_DHG_CYH"/>
    <property type="match status" value="1"/>
</dbReference>
<dbReference type="Pfam" id="PF02882">
    <property type="entry name" value="THF_DHG_CYH_C"/>
    <property type="match status" value="1"/>
</dbReference>
<dbReference type="PRINTS" id="PR00085">
    <property type="entry name" value="THFDHDRGNASE"/>
</dbReference>
<dbReference type="SUPFAM" id="SSF53223">
    <property type="entry name" value="Aminoacid dehydrogenase-like, N-terminal domain"/>
    <property type="match status" value="1"/>
</dbReference>
<dbReference type="SUPFAM" id="SSF51735">
    <property type="entry name" value="NAD(P)-binding Rossmann-fold domains"/>
    <property type="match status" value="1"/>
</dbReference>
<dbReference type="PROSITE" id="PS00766">
    <property type="entry name" value="THF_DHG_CYH_1"/>
    <property type="match status" value="1"/>
</dbReference>
<dbReference type="PROSITE" id="PS00767">
    <property type="entry name" value="THF_DHG_CYH_2"/>
    <property type="match status" value="1"/>
</dbReference>
<sequence length="288" mass="30983">MSAKIIDGKTIAQQVRNEVAAVVQQRLAAGKRAPGLAVVLVGENPASQIYVASKRKACEEVGFVSRSYDLPMATSEAELLALIDSLNEDTEIDGILIQLPLPNGIDNVKVLERIHPDKDVDGFHPYNVGRLCQRAPKLRACTPRGIMTLLERYDIPTYGLNAVVVGASNIVGRPMSLELLLAGCTTTVTHRFTKNLRHHIENADLLVVAVGKPGFIPGEWIKPGAIVIDVGINRLESGKVVGDVAFDVAAERAGWITPVPGGVGPMTVATLIQNTLQACEEYHDISQN</sequence>
<evidence type="ECO:0000255" key="1">
    <source>
        <dbReference type="HAMAP-Rule" id="MF_01576"/>
    </source>
</evidence>
<proteinExistence type="inferred from homology"/>
<keyword id="KW-0028">Amino-acid biosynthesis</keyword>
<keyword id="KW-0368">Histidine biosynthesis</keyword>
<keyword id="KW-0378">Hydrolase</keyword>
<keyword id="KW-0486">Methionine biosynthesis</keyword>
<keyword id="KW-0511">Multifunctional enzyme</keyword>
<keyword id="KW-0521">NADP</keyword>
<keyword id="KW-0554">One-carbon metabolism</keyword>
<keyword id="KW-0560">Oxidoreductase</keyword>
<keyword id="KW-0658">Purine biosynthesis</keyword>
<protein>
    <recommendedName>
        <fullName evidence="1">Bifunctional protein FolD</fullName>
    </recommendedName>
    <domain>
        <recommendedName>
            <fullName evidence="1">Methylenetetrahydrofolate dehydrogenase</fullName>
            <ecNumber evidence="1">1.5.1.5</ecNumber>
        </recommendedName>
    </domain>
    <domain>
        <recommendedName>
            <fullName evidence="1">Methenyltetrahydrofolate cyclohydrolase</fullName>
            <ecNumber evidence="1">3.5.4.9</ecNumber>
        </recommendedName>
    </domain>
</protein>
<organism>
    <name type="scientific">Yersinia pestis bv. Antiqua (strain Nepal516)</name>
    <dbReference type="NCBI Taxonomy" id="377628"/>
    <lineage>
        <taxon>Bacteria</taxon>
        <taxon>Pseudomonadati</taxon>
        <taxon>Pseudomonadota</taxon>
        <taxon>Gammaproteobacteria</taxon>
        <taxon>Enterobacterales</taxon>
        <taxon>Yersiniaceae</taxon>
        <taxon>Yersinia</taxon>
    </lineage>
</organism>
<gene>
    <name evidence="1" type="primary">folD</name>
    <name type="ordered locus">YPN_1020</name>
    <name type="ORF">YP516_1104</name>
</gene>
<accession>Q1CKX8</accession>
<accession>C4GQU5</accession>